<accession>Q7X149</accession>
<keyword id="KW-0687">Ribonucleoprotein</keyword>
<keyword id="KW-0689">Ribosomal protein</keyword>
<evidence type="ECO:0000255" key="1">
    <source>
        <dbReference type="HAMAP-Rule" id="MF_00294"/>
    </source>
</evidence>
<evidence type="ECO:0000305" key="2"/>
<feature type="chain" id="PRO_0000170235" description="Large ribosomal subunit protein bL33">
    <location>
        <begin position="1"/>
        <end position="47"/>
    </location>
</feature>
<organism>
    <name type="scientific">Staphylococcus capitis</name>
    <dbReference type="NCBI Taxonomy" id="29388"/>
    <lineage>
        <taxon>Bacteria</taxon>
        <taxon>Bacillati</taxon>
        <taxon>Bacillota</taxon>
        <taxon>Bacilli</taxon>
        <taxon>Bacillales</taxon>
        <taxon>Staphylococcaceae</taxon>
        <taxon>Staphylococcus</taxon>
    </lineage>
</organism>
<sequence length="47" mass="5363">MKKVPLNCEVCGNRNYNVPKKEGSATRLTLKKYCPKCNSHTVHKESK</sequence>
<dbReference type="EMBL" id="AY234837">
    <property type="protein sequence ID" value="AAO62597.1"/>
    <property type="molecule type" value="Genomic_DNA"/>
</dbReference>
<dbReference type="RefSeq" id="WP_002452476.1">
    <property type="nucleotide sequence ID" value="NZ_WHVU01000003.1"/>
</dbReference>
<dbReference type="SMR" id="Q7X149"/>
<dbReference type="GeneID" id="93670431"/>
<dbReference type="eggNOG" id="COG0267">
    <property type="taxonomic scope" value="Bacteria"/>
</dbReference>
<dbReference type="GO" id="GO:0005737">
    <property type="term" value="C:cytoplasm"/>
    <property type="evidence" value="ECO:0007669"/>
    <property type="project" value="UniProtKB-ARBA"/>
</dbReference>
<dbReference type="GO" id="GO:1990904">
    <property type="term" value="C:ribonucleoprotein complex"/>
    <property type="evidence" value="ECO:0007669"/>
    <property type="project" value="UniProtKB-KW"/>
</dbReference>
<dbReference type="GO" id="GO:0005840">
    <property type="term" value="C:ribosome"/>
    <property type="evidence" value="ECO:0007669"/>
    <property type="project" value="UniProtKB-KW"/>
</dbReference>
<dbReference type="GO" id="GO:0003735">
    <property type="term" value="F:structural constituent of ribosome"/>
    <property type="evidence" value="ECO:0007669"/>
    <property type="project" value="InterPro"/>
</dbReference>
<dbReference type="GO" id="GO:0006412">
    <property type="term" value="P:translation"/>
    <property type="evidence" value="ECO:0007669"/>
    <property type="project" value="UniProtKB-UniRule"/>
</dbReference>
<dbReference type="Gene3D" id="2.20.28.120">
    <property type="entry name" value="Ribosomal protein L33"/>
    <property type="match status" value="1"/>
</dbReference>
<dbReference type="HAMAP" id="MF_00294">
    <property type="entry name" value="Ribosomal_bL33"/>
    <property type="match status" value="1"/>
</dbReference>
<dbReference type="InterPro" id="IPR001705">
    <property type="entry name" value="Ribosomal_bL33"/>
</dbReference>
<dbReference type="InterPro" id="IPR018264">
    <property type="entry name" value="Ribosomal_bL33_CS"/>
</dbReference>
<dbReference type="InterPro" id="IPR038584">
    <property type="entry name" value="Ribosomal_bL33_sf"/>
</dbReference>
<dbReference type="InterPro" id="IPR011332">
    <property type="entry name" value="Ribosomal_zn-bd"/>
</dbReference>
<dbReference type="NCBIfam" id="NF001764">
    <property type="entry name" value="PRK00504.1"/>
    <property type="match status" value="1"/>
</dbReference>
<dbReference type="NCBIfam" id="TIGR01023">
    <property type="entry name" value="rpmG_bact"/>
    <property type="match status" value="1"/>
</dbReference>
<dbReference type="Pfam" id="PF00471">
    <property type="entry name" value="Ribosomal_L33"/>
    <property type="match status" value="1"/>
</dbReference>
<dbReference type="SUPFAM" id="SSF57829">
    <property type="entry name" value="Zn-binding ribosomal proteins"/>
    <property type="match status" value="1"/>
</dbReference>
<dbReference type="PROSITE" id="PS00582">
    <property type="entry name" value="RIBOSOMAL_L33"/>
    <property type="match status" value="1"/>
</dbReference>
<comment type="similarity">
    <text evidence="1">Belongs to the bacterial ribosomal protein bL33 family.</text>
</comment>
<name>RL33_STACP</name>
<gene>
    <name evidence="1" type="primary">rpmG</name>
</gene>
<protein>
    <recommendedName>
        <fullName evidence="1">Large ribosomal subunit protein bL33</fullName>
    </recommendedName>
    <alternativeName>
        <fullName evidence="2">50S ribosomal protein L33</fullName>
    </alternativeName>
</protein>
<proteinExistence type="inferred from homology"/>
<reference key="1">
    <citation type="journal article" date="2003" name="Genes Cells">
        <title>A new staphylococcal sigma factor in the conserved gene cassette: functional significance and implication for the evolutionary processes.</title>
        <authorList>
            <person name="Morikawa K."/>
            <person name="Inose Y."/>
            <person name="Okamura H."/>
            <person name="Maruyama A."/>
            <person name="Hayashi H."/>
            <person name="Takeyasu K."/>
            <person name="Ohta T."/>
        </authorList>
    </citation>
    <scope>NUCLEOTIDE SEQUENCE [GENOMIC DNA]</scope>
    <source>
        <strain>GIFU 9121</strain>
    </source>
</reference>